<accession>P0AEW5</accession>
<accession>P36650</accession>
<keyword id="KW-0114">cAMP</keyword>
<keyword id="KW-0378">Hydrolase</keyword>
<keyword id="KW-0408">Iron</keyword>
<keyword id="KW-0479">Metal-binding</keyword>
<keyword id="KW-0547">Nucleotide-binding</keyword>
<keyword id="KW-1185">Reference proteome</keyword>
<reference key="1">
    <citation type="journal article" date="2001" name="Nature">
        <title>Genome sequence of enterohaemorrhagic Escherichia coli O157:H7.</title>
        <authorList>
            <person name="Perna N.T."/>
            <person name="Plunkett G. III"/>
            <person name="Burland V."/>
            <person name="Mau B."/>
            <person name="Glasner J.D."/>
            <person name="Rose D.J."/>
            <person name="Mayhew G.F."/>
            <person name="Evans P.S."/>
            <person name="Gregor J."/>
            <person name="Kirkpatrick H.A."/>
            <person name="Posfai G."/>
            <person name="Hackett J."/>
            <person name="Klink S."/>
            <person name="Boutin A."/>
            <person name="Shao Y."/>
            <person name="Miller L."/>
            <person name="Grotbeck E.J."/>
            <person name="Davis N.W."/>
            <person name="Lim A."/>
            <person name="Dimalanta E.T."/>
            <person name="Potamousis K."/>
            <person name="Apodaca J."/>
            <person name="Anantharaman T.S."/>
            <person name="Lin J."/>
            <person name="Yen G."/>
            <person name="Schwartz D.C."/>
            <person name="Welch R.A."/>
            <person name="Blattner F.R."/>
        </authorList>
    </citation>
    <scope>NUCLEOTIDE SEQUENCE [LARGE SCALE GENOMIC DNA]</scope>
    <source>
        <strain>O157:H7 / EDL933 / ATCC 700927 / EHEC</strain>
    </source>
</reference>
<reference key="2">
    <citation type="journal article" date="2001" name="DNA Res.">
        <title>Complete genome sequence of enterohemorrhagic Escherichia coli O157:H7 and genomic comparison with a laboratory strain K-12.</title>
        <authorList>
            <person name="Hayashi T."/>
            <person name="Makino K."/>
            <person name="Ohnishi M."/>
            <person name="Kurokawa K."/>
            <person name="Ishii K."/>
            <person name="Yokoyama K."/>
            <person name="Han C.-G."/>
            <person name="Ohtsubo E."/>
            <person name="Nakayama K."/>
            <person name="Murata T."/>
            <person name="Tanaka M."/>
            <person name="Tobe T."/>
            <person name="Iida T."/>
            <person name="Takami H."/>
            <person name="Honda T."/>
            <person name="Sasakawa C."/>
            <person name="Ogasawara N."/>
            <person name="Yasunaga T."/>
            <person name="Kuhara S."/>
            <person name="Shiba T."/>
            <person name="Hattori M."/>
            <person name="Shinagawa H."/>
        </authorList>
    </citation>
    <scope>NUCLEOTIDE SEQUENCE [LARGE SCALE GENOMIC DNA]</scope>
    <source>
        <strain>O157:H7 / Sakai / RIMD 0509952 / EHEC</strain>
    </source>
</reference>
<sequence length="275" mass="30938">MESLLTLPLAGEARVRILQITDTHLFAQKHEALLGVNTWESYQAVLEAIRPHQHEFDLIVATGDLAQDQSSAAYQHFAEGIASFRAPCVWLPGNHDFQPAMYSALQDAGISPAKRVFIGEQWQILLLDSQVFGVPHGELSEFQLEWLERKLADAPERHTLLLLHHHPLPAGCSWLDQHSLRNAGELDTVLAKFPHVKYLLCGHIHQELDLDWNGRRLLATPSTCVQFKPHCSNFTLDTIAPGWRTLELHADGTLTTEVHRLADTRFQPDTASEGY</sequence>
<protein>
    <recommendedName>
        <fullName evidence="1">3',5'-cyclic adenosine monophosphate phosphodiesterase CpdA</fullName>
        <shortName evidence="1">3',5'-cyclic AMP phosphodiesterase</shortName>
        <shortName evidence="1">cAMP phosphodiesterase</shortName>
        <ecNumber evidence="1">3.1.4.53</ecNumber>
    </recommendedName>
</protein>
<feature type="chain" id="PRO_0000084147" description="3',5'-cyclic adenosine monophosphate phosphodiesterase CpdA">
    <location>
        <begin position="1"/>
        <end position="275"/>
    </location>
</feature>
<feature type="binding site" evidence="1">
    <location>
        <position position="22"/>
    </location>
    <ligand>
        <name>Fe cation</name>
        <dbReference type="ChEBI" id="CHEBI:24875"/>
        <label>1</label>
    </ligand>
</feature>
<feature type="binding site" evidence="1">
    <location>
        <position position="24"/>
    </location>
    <ligand>
        <name>AMP</name>
        <dbReference type="ChEBI" id="CHEBI:456215"/>
    </ligand>
</feature>
<feature type="binding site" evidence="1">
    <location>
        <position position="24"/>
    </location>
    <ligand>
        <name>Fe cation</name>
        <dbReference type="ChEBI" id="CHEBI:24875"/>
        <label>1</label>
    </ligand>
</feature>
<feature type="binding site" evidence="1">
    <location>
        <position position="64"/>
    </location>
    <ligand>
        <name>AMP</name>
        <dbReference type="ChEBI" id="CHEBI:456215"/>
    </ligand>
</feature>
<feature type="binding site" evidence="1">
    <location>
        <position position="64"/>
    </location>
    <ligand>
        <name>Fe cation</name>
        <dbReference type="ChEBI" id="CHEBI:24875"/>
        <label>1</label>
    </ligand>
</feature>
<feature type="binding site" evidence="1">
    <location>
        <position position="64"/>
    </location>
    <ligand>
        <name>Fe cation</name>
        <dbReference type="ChEBI" id="CHEBI:24875"/>
        <label>2</label>
    </ligand>
</feature>
<feature type="binding site" evidence="1">
    <location>
        <begin position="94"/>
        <end position="95"/>
    </location>
    <ligand>
        <name>AMP</name>
        <dbReference type="ChEBI" id="CHEBI:456215"/>
    </ligand>
</feature>
<feature type="binding site" evidence="1">
    <location>
        <position position="94"/>
    </location>
    <ligand>
        <name>Fe cation</name>
        <dbReference type="ChEBI" id="CHEBI:24875"/>
        <label>2</label>
    </ligand>
</feature>
<feature type="binding site" evidence="1">
    <location>
        <position position="164"/>
    </location>
    <ligand>
        <name>Fe cation</name>
        <dbReference type="ChEBI" id="CHEBI:24875"/>
        <label>2</label>
    </ligand>
</feature>
<feature type="binding site" evidence="1">
    <location>
        <position position="203"/>
    </location>
    <ligand>
        <name>Fe cation</name>
        <dbReference type="ChEBI" id="CHEBI:24875"/>
        <label>2</label>
    </ligand>
</feature>
<feature type="binding site" evidence="1">
    <location>
        <position position="205"/>
    </location>
    <ligand>
        <name>AMP</name>
        <dbReference type="ChEBI" id="CHEBI:456215"/>
    </ligand>
</feature>
<feature type="binding site" evidence="1">
    <location>
        <position position="205"/>
    </location>
    <ligand>
        <name>Fe cation</name>
        <dbReference type="ChEBI" id="CHEBI:24875"/>
        <label>1</label>
    </ligand>
</feature>
<name>CPDA_ECO57</name>
<organism>
    <name type="scientific">Escherichia coli O157:H7</name>
    <dbReference type="NCBI Taxonomy" id="83334"/>
    <lineage>
        <taxon>Bacteria</taxon>
        <taxon>Pseudomonadati</taxon>
        <taxon>Pseudomonadota</taxon>
        <taxon>Gammaproteobacteria</taxon>
        <taxon>Enterobacterales</taxon>
        <taxon>Enterobacteriaceae</taxon>
        <taxon>Escherichia</taxon>
    </lineage>
</organism>
<comment type="function">
    <text evidence="1">Hydrolyzes cAMP to 5'-AMP. Plays an important regulatory role in modulating the intracellular concentration of cAMP, thereby influencing cAMP-dependent processes.</text>
</comment>
<comment type="catalytic activity">
    <reaction evidence="1">
        <text>3',5'-cyclic AMP + H2O = AMP + H(+)</text>
        <dbReference type="Rhea" id="RHEA:25277"/>
        <dbReference type="ChEBI" id="CHEBI:15377"/>
        <dbReference type="ChEBI" id="CHEBI:15378"/>
        <dbReference type="ChEBI" id="CHEBI:58165"/>
        <dbReference type="ChEBI" id="CHEBI:456215"/>
        <dbReference type="EC" id="3.1.4.53"/>
    </reaction>
</comment>
<comment type="cofactor">
    <cofactor evidence="1">
        <name>Fe(2+)</name>
        <dbReference type="ChEBI" id="CHEBI:29033"/>
    </cofactor>
    <text evidence="1">Binds 2 Fe(2+) ions per subunit.</text>
</comment>
<comment type="similarity">
    <text evidence="1">Belongs to the cyclic nucleotide phosphodiesterase class-III family.</text>
</comment>
<gene>
    <name evidence="1" type="primary">cpdA</name>
    <name type="synonym">icc</name>
    <name type="ordered locus">Z4389</name>
    <name type="ordered locus">ECs3920</name>
</gene>
<evidence type="ECO:0000255" key="1">
    <source>
        <dbReference type="HAMAP-Rule" id="MF_00905"/>
    </source>
</evidence>
<proteinExistence type="inferred from homology"/>
<dbReference type="EC" id="3.1.4.53" evidence="1"/>
<dbReference type="EMBL" id="AE005174">
    <property type="protein sequence ID" value="AAG58171.1"/>
    <property type="molecule type" value="Genomic_DNA"/>
</dbReference>
<dbReference type="EMBL" id="BA000007">
    <property type="protein sequence ID" value="BAB37343.1"/>
    <property type="molecule type" value="Genomic_DNA"/>
</dbReference>
<dbReference type="PIR" id="G85963">
    <property type="entry name" value="G85963"/>
</dbReference>
<dbReference type="PIR" id="H91118">
    <property type="entry name" value="H91118"/>
</dbReference>
<dbReference type="RefSeq" id="NP_311947.1">
    <property type="nucleotide sequence ID" value="NC_002695.1"/>
</dbReference>
<dbReference type="RefSeq" id="WP_000444747.1">
    <property type="nucleotide sequence ID" value="NZ_VOAI01000009.1"/>
</dbReference>
<dbReference type="SMR" id="P0AEW5"/>
<dbReference type="STRING" id="155864.Z4389"/>
<dbReference type="GeneID" id="916255"/>
<dbReference type="GeneID" id="93778961"/>
<dbReference type="KEGG" id="ece:Z4389"/>
<dbReference type="KEGG" id="ecs:ECs_3920"/>
<dbReference type="PATRIC" id="fig|386585.9.peg.4088"/>
<dbReference type="eggNOG" id="COG1409">
    <property type="taxonomic scope" value="Bacteria"/>
</dbReference>
<dbReference type="HOGENOM" id="CLU_070320_0_0_6"/>
<dbReference type="OMA" id="CAWLDQH"/>
<dbReference type="Proteomes" id="UP000000558">
    <property type="component" value="Chromosome"/>
</dbReference>
<dbReference type="Proteomes" id="UP000002519">
    <property type="component" value="Chromosome"/>
</dbReference>
<dbReference type="GO" id="GO:0004115">
    <property type="term" value="F:3',5'-cyclic-AMP phosphodiesterase activity"/>
    <property type="evidence" value="ECO:0007669"/>
    <property type="project" value="UniProtKB-UniRule"/>
</dbReference>
<dbReference type="GO" id="GO:0046872">
    <property type="term" value="F:metal ion binding"/>
    <property type="evidence" value="ECO:0007669"/>
    <property type="project" value="UniProtKB-UniRule"/>
</dbReference>
<dbReference type="GO" id="GO:0000166">
    <property type="term" value="F:nucleotide binding"/>
    <property type="evidence" value="ECO:0007669"/>
    <property type="project" value="UniProtKB-UniRule"/>
</dbReference>
<dbReference type="CDD" id="cd07402">
    <property type="entry name" value="MPP_GpdQ"/>
    <property type="match status" value="1"/>
</dbReference>
<dbReference type="FunFam" id="3.60.21.10:FF:000014">
    <property type="entry name" value="3',5'-cyclic adenosine monophosphate phosphodiesterase CpdA"/>
    <property type="match status" value="1"/>
</dbReference>
<dbReference type="Gene3D" id="3.60.21.10">
    <property type="match status" value="1"/>
</dbReference>
<dbReference type="HAMAP" id="MF_00905">
    <property type="entry name" value="cAMP_phosphodiest_CpdA"/>
    <property type="match status" value="1"/>
</dbReference>
<dbReference type="InterPro" id="IPR004843">
    <property type="entry name" value="Calcineurin-like_PHP_ApaH"/>
</dbReference>
<dbReference type="InterPro" id="IPR046379">
    <property type="entry name" value="cAMP_phosphodiest_CpdA"/>
</dbReference>
<dbReference type="InterPro" id="IPR050884">
    <property type="entry name" value="CNP_phosphodiesterase-III"/>
</dbReference>
<dbReference type="InterPro" id="IPR026575">
    <property type="entry name" value="GpdQ/CpdA-like"/>
</dbReference>
<dbReference type="InterPro" id="IPR029052">
    <property type="entry name" value="Metallo-depent_PP-like"/>
</dbReference>
<dbReference type="NCBIfam" id="NF008359">
    <property type="entry name" value="PRK11148.1"/>
    <property type="match status" value="1"/>
</dbReference>
<dbReference type="PANTHER" id="PTHR42988:SF2">
    <property type="entry name" value="CYCLIC NUCLEOTIDE PHOSPHODIESTERASE CBUA0032-RELATED"/>
    <property type="match status" value="1"/>
</dbReference>
<dbReference type="PANTHER" id="PTHR42988">
    <property type="entry name" value="PHOSPHOHYDROLASE"/>
    <property type="match status" value="1"/>
</dbReference>
<dbReference type="Pfam" id="PF00149">
    <property type="entry name" value="Metallophos"/>
    <property type="match status" value="1"/>
</dbReference>
<dbReference type="SUPFAM" id="SSF56300">
    <property type="entry name" value="Metallo-dependent phosphatases"/>
    <property type="match status" value="1"/>
</dbReference>